<name>EFTS_CYAM1</name>
<feature type="chain" id="PRO_0000161245" description="Elongation factor Ts, chloroplastic">
    <location>
        <begin position="1"/>
        <end position="209"/>
    </location>
</feature>
<evidence type="ECO:0000255" key="1">
    <source>
        <dbReference type="HAMAP-Rule" id="MF_03135"/>
    </source>
</evidence>
<keyword id="KW-0150">Chloroplast</keyword>
<keyword id="KW-0251">Elongation factor</keyword>
<keyword id="KW-0934">Plastid</keyword>
<keyword id="KW-0648">Protein biosynthesis</keyword>
<keyword id="KW-1185">Reference proteome</keyword>
<proteinExistence type="inferred from homology"/>
<organism>
    <name type="scientific">Cyanidioschyzon merolae (strain NIES-3377 / 10D)</name>
    <name type="common">Unicellular red alga</name>
    <dbReference type="NCBI Taxonomy" id="280699"/>
    <lineage>
        <taxon>Eukaryota</taxon>
        <taxon>Rhodophyta</taxon>
        <taxon>Bangiophyceae</taxon>
        <taxon>Cyanidiales</taxon>
        <taxon>Cyanidiaceae</taxon>
        <taxon>Cyanidioschyzon</taxon>
    </lineage>
</organism>
<reference key="1">
    <citation type="journal article" date="2003" name="DNA Res.">
        <title>Complete sequence and analysis of the plastid genome of the unicellular red alga Cyanidioschyzon merolae.</title>
        <authorList>
            <person name="Ohta N."/>
            <person name="Matsuzaki M."/>
            <person name="Misumi O."/>
            <person name="Miyagishima S.-Y."/>
            <person name="Nozaki H."/>
            <person name="Tanaka K."/>
            <person name="Shin-i T."/>
            <person name="Kohara Y."/>
            <person name="Kuroiwa T."/>
        </authorList>
    </citation>
    <scope>NUCLEOTIDE SEQUENCE [LARGE SCALE GENOMIC DNA]</scope>
    <source>
        <strain>NIES-3377 / 10D</strain>
    </source>
</reference>
<gene>
    <name type="primary">tsf</name>
</gene>
<sequence length="209" mass="23480">MKELVQQLRKDTGAGVMDCKKALQEANGDVVQALNLLKKKGLAKAEQKRTRSTTNGRVESYVHAGNRLGVLLELNCETDFVAKSEPFQLLAKNLAMQIAACEQVRYIEWEQIPSSVIESVKSQVAEQLVEQLANKPVQLRSQIVEAKVKKQLQKQCLLDQPFIKDEQLTVDEVIRTTIAQVGENIRLKRFARFVLGEETGEETGEETND</sequence>
<protein>
    <recommendedName>
        <fullName>Elongation factor Ts, chloroplastic</fullName>
        <shortName evidence="1">EF-Ts</shortName>
    </recommendedName>
</protein>
<comment type="function">
    <text evidence="1">Associates with the EF-Tu.GDP complex and induces the exchange of GDP to GTP. It remains bound to the aminoacyl-tRNA.EF-Tu.GTP complex up to the GTP hydrolysis stage on the ribosome.</text>
</comment>
<comment type="subcellular location">
    <subcellularLocation>
        <location>Plastid</location>
        <location>Chloroplast</location>
    </subcellularLocation>
</comment>
<comment type="similarity">
    <text evidence="1">Belongs to the EF-Ts family.</text>
</comment>
<accession>Q85FR4</accession>
<dbReference type="EMBL" id="AB002583">
    <property type="protein sequence ID" value="BAC76281.1"/>
    <property type="molecule type" value="Genomic_DNA"/>
</dbReference>
<dbReference type="RefSeq" id="NP_849119.1">
    <property type="nucleotide sequence ID" value="NC_004799.1"/>
</dbReference>
<dbReference type="SMR" id="Q85FR4"/>
<dbReference type="STRING" id="280699.Q85FR4"/>
<dbReference type="EnsemblPlants" id="CMV219CT">
    <property type="protein sequence ID" value="CMV219CT"/>
    <property type="gene ID" value="CMV219C"/>
</dbReference>
<dbReference type="GeneID" id="845060"/>
<dbReference type="Gramene" id="CMV219CT">
    <property type="protein sequence ID" value="CMV219CT"/>
    <property type="gene ID" value="CMV219C"/>
</dbReference>
<dbReference type="KEGG" id="cme:CymeCp187"/>
<dbReference type="eggNOG" id="KOG1071">
    <property type="taxonomic scope" value="Eukaryota"/>
</dbReference>
<dbReference type="HOGENOM" id="CLU_047155_1_1_1"/>
<dbReference type="Proteomes" id="UP000007014">
    <property type="component" value="Chloroplast"/>
</dbReference>
<dbReference type="GO" id="GO:0009507">
    <property type="term" value="C:chloroplast"/>
    <property type="evidence" value="ECO:0007669"/>
    <property type="project" value="UniProtKB-SubCell"/>
</dbReference>
<dbReference type="GO" id="GO:0005739">
    <property type="term" value="C:mitochondrion"/>
    <property type="evidence" value="ECO:0007669"/>
    <property type="project" value="UniProtKB-UniRule"/>
</dbReference>
<dbReference type="GO" id="GO:0003746">
    <property type="term" value="F:translation elongation factor activity"/>
    <property type="evidence" value="ECO:0007669"/>
    <property type="project" value="UniProtKB-UniRule"/>
</dbReference>
<dbReference type="GO" id="GO:0070125">
    <property type="term" value="P:mitochondrial translational elongation"/>
    <property type="evidence" value="ECO:0007669"/>
    <property type="project" value="TreeGrafter"/>
</dbReference>
<dbReference type="CDD" id="cd14275">
    <property type="entry name" value="UBA_EF-Ts"/>
    <property type="match status" value="1"/>
</dbReference>
<dbReference type="FunFam" id="1.10.8.10:FF:000001">
    <property type="entry name" value="Elongation factor Ts"/>
    <property type="match status" value="1"/>
</dbReference>
<dbReference type="Gene3D" id="1.10.286.20">
    <property type="match status" value="1"/>
</dbReference>
<dbReference type="Gene3D" id="1.10.8.10">
    <property type="entry name" value="DNA helicase RuvA subunit, C-terminal domain"/>
    <property type="match status" value="1"/>
</dbReference>
<dbReference type="Gene3D" id="3.30.479.20">
    <property type="entry name" value="Elongation factor Ts, dimerisation domain"/>
    <property type="match status" value="1"/>
</dbReference>
<dbReference type="HAMAP" id="MF_00050">
    <property type="entry name" value="EF_Ts"/>
    <property type="match status" value="1"/>
</dbReference>
<dbReference type="InterPro" id="IPR036402">
    <property type="entry name" value="EF-Ts_dimer_sf"/>
</dbReference>
<dbReference type="InterPro" id="IPR001816">
    <property type="entry name" value="Transl_elong_EFTs/EF1B"/>
</dbReference>
<dbReference type="InterPro" id="IPR014039">
    <property type="entry name" value="Transl_elong_EFTs/EF1B_dimer"/>
</dbReference>
<dbReference type="InterPro" id="IPR018101">
    <property type="entry name" value="Transl_elong_Ts_CS"/>
</dbReference>
<dbReference type="InterPro" id="IPR009060">
    <property type="entry name" value="UBA-like_sf"/>
</dbReference>
<dbReference type="PANTHER" id="PTHR11741">
    <property type="entry name" value="ELONGATION FACTOR TS"/>
    <property type="match status" value="1"/>
</dbReference>
<dbReference type="PANTHER" id="PTHR11741:SF10">
    <property type="entry name" value="POLYPROTEIN OF EF-TS, CHLOROPLASTIC"/>
    <property type="match status" value="1"/>
</dbReference>
<dbReference type="Pfam" id="PF00889">
    <property type="entry name" value="EF_TS"/>
    <property type="match status" value="1"/>
</dbReference>
<dbReference type="SUPFAM" id="SSF54713">
    <property type="entry name" value="Elongation factor Ts (EF-Ts), dimerisation domain"/>
    <property type="match status" value="1"/>
</dbReference>
<dbReference type="SUPFAM" id="SSF46934">
    <property type="entry name" value="UBA-like"/>
    <property type="match status" value="1"/>
</dbReference>
<dbReference type="PROSITE" id="PS01126">
    <property type="entry name" value="EF_TS_1"/>
    <property type="match status" value="1"/>
</dbReference>
<dbReference type="PROSITE" id="PS01127">
    <property type="entry name" value="EF_TS_2"/>
    <property type="match status" value="1"/>
</dbReference>
<geneLocation type="chloroplast"/>